<feature type="chain" id="PRO_0000288923" description="Monocarboxylate transporter 14">
    <location>
        <begin position="1"/>
        <end position="510"/>
    </location>
</feature>
<feature type="topological domain" description="Cytoplasmic" evidence="2">
    <location>
        <begin position="1"/>
        <end position="27"/>
    </location>
</feature>
<feature type="transmembrane region" description="Helical" evidence="2">
    <location>
        <begin position="28"/>
        <end position="48"/>
    </location>
</feature>
<feature type="transmembrane region" description="Helical" evidence="2">
    <location>
        <begin position="74"/>
        <end position="94"/>
    </location>
</feature>
<feature type="transmembrane region" description="Helical" evidence="2">
    <location>
        <begin position="103"/>
        <end position="123"/>
    </location>
</feature>
<feature type="transmembrane region" description="Helical" evidence="2">
    <location>
        <begin position="127"/>
        <end position="147"/>
    </location>
</feature>
<feature type="transmembrane region" description="Helical" evidence="2">
    <location>
        <begin position="159"/>
        <end position="179"/>
    </location>
</feature>
<feature type="transmembrane region" description="Helical" evidence="2">
    <location>
        <begin position="191"/>
        <end position="209"/>
    </location>
</feature>
<feature type="transmembrane region" description="Helical" evidence="2">
    <location>
        <begin position="315"/>
        <end position="335"/>
    </location>
</feature>
<feature type="transmembrane region" description="Helical" evidence="2">
    <location>
        <begin position="353"/>
        <end position="373"/>
    </location>
</feature>
<feature type="transmembrane region" description="Helical" evidence="2">
    <location>
        <begin position="379"/>
        <end position="399"/>
    </location>
</feature>
<feature type="transmembrane region" description="Helical" evidence="2">
    <location>
        <begin position="408"/>
        <end position="428"/>
    </location>
</feature>
<feature type="transmembrane region" description="Helical" evidence="2">
    <location>
        <begin position="443"/>
        <end position="463"/>
    </location>
</feature>
<feature type="transmembrane region" description="Helical" evidence="2">
    <location>
        <begin position="474"/>
        <end position="494"/>
    </location>
</feature>
<feature type="topological domain" description="Cytoplasmic" evidence="2">
    <location>
        <begin position="495"/>
        <end position="510"/>
    </location>
</feature>
<feature type="region of interest" description="Disordered" evidence="3">
    <location>
        <begin position="214"/>
        <end position="255"/>
    </location>
</feature>
<feature type="compositionally biased region" description="Polar residues" evidence="3">
    <location>
        <begin position="233"/>
        <end position="244"/>
    </location>
</feature>
<feature type="splice variant" id="VSP_025826" description="In isoform 2." evidence="4">
    <location>
        <begin position="1"/>
        <end position="174"/>
    </location>
</feature>
<feature type="sequence conflict" description="In Ref. 1; BAB70909." evidence="5" ref="1">
    <original>M</original>
    <variation>T</variation>
    <location>
        <position position="209"/>
    </location>
</feature>
<accession>Q7RTX9</accession>
<accession>A8KA08</accession>
<accession>Q53R92</accession>
<accession>Q96NI7</accession>
<organism>
    <name type="scientific">Homo sapiens</name>
    <name type="common">Human</name>
    <dbReference type="NCBI Taxonomy" id="9606"/>
    <lineage>
        <taxon>Eukaryota</taxon>
        <taxon>Metazoa</taxon>
        <taxon>Chordata</taxon>
        <taxon>Craniata</taxon>
        <taxon>Vertebrata</taxon>
        <taxon>Euteleostomi</taxon>
        <taxon>Mammalia</taxon>
        <taxon>Eutheria</taxon>
        <taxon>Euarchontoglires</taxon>
        <taxon>Primates</taxon>
        <taxon>Haplorrhini</taxon>
        <taxon>Catarrhini</taxon>
        <taxon>Hominidae</taxon>
        <taxon>Homo</taxon>
    </lineage>
</organism>
<keyword id="KW-0025">Alternative splicing</keyword>
<keyword id="KW-1003">Cell membrane</keyword>
<keyword id="KW-0472">Membrane</keyword>
<keyword id="KW-1267">Proteomics identification</keyword>
<keyword id="KW-1185">Reference proteome</keyword>
<keyword id="KW-0769">Symport</keyword>
<keyword id="KW-0812">Transmembrane</keyword>
<keyword id="KW-1133">Transmembrane helix</keyword>
<keyword id="KW-0813">Transport</keyword>
<name>MOT14_HUMAN</name>
<comment type="function">
    <text evidence="1">Proton-linked monocarboxylate transporter. May catalyze the transport of monocarboxylates across the plasma membrane.</text>
</comment>
<comment type="subcellular location">
    <subcellularLocation>
        <location evidence="1">Cell membrane</location>
        <topology evidence="1">Multi-pass membrane protein</topology>
    </subcellularLocation>
</comment>
<comment type="alternative products">
    <event type="alternative splicing"/>
    <isoform>
        <id>Q7RTX9-1</id>
        <name>1</name>
        <sequence type="displayed"/>
    </isoform>
    <isoform>
        <id>Q7RTX9-2</id>
        <name>2</name>
        <sequence type="described" ref="VSP_025826"/>
    </isoform>
</comment>
<comment type="similarity">
    <text evidence="5">Belongs to the major facilitator superfamily. Monocarboxylate porter (TC 2.A.1.13) family.</text>
</comment>
<dbReference type="EMBL" id="AK055356">
    <property type="protein sequence ID" value="BAB70909.1"/>
    <property type="molecule type" value="mRNA"/>
</dbReference>
<dbReference type="EMBL" id="AK292873">
    <property type="protein sequence ID" value="BAF85562.1"/>
    <property type="molecule type" value="mRNA"/>
</dbReference>
<dbReference type="EMBL" id="AC093171">
    <property type="protein sequence ID" value="AAY24109.1"/>
    <property type="molecule type" value="Genomic_DNA"/>
</dbReference>
<dbReference type="EMBL" id="CH471063">
    <property type="protein sequence ID" value="EAW70913.1"/>
    <property type="molecule type" value="Genomic_DNA"/>
</dbReference>
<dbReference type="EMBL" id="BC065524">
    <property type="protein sequence ID" value="AAH65524.1"/>
    <property type="molecule type" value="mRNA"/>
</dbReference>
<dbReference type="EMBL" id="BN000146">
    <property type="protein sequence ID" value="CAD80157.1"/>
    <property type="molecule type" value="mRNA"/>
</dbReference>
<dbReference type="CCDS" id="CCDS2473.1">
    <molecule id="Q7RTX9-1"/>
</dbReference>
<dbReference type="RefSeq" id="NP_689740.2">
    <molecule id="Q7RTX9-1"/>
    <property type="nucleotide sequence ID" value="NM_152527.4"/>
</dbReference>
<dbReference type="RefSeq" id="XP_011509053.1">
    <molecule id="Q7RTX9-1"/>
    <property type="nucleotide sequence ID" value="XM_011510751.4"/>
</dbReference>
<dbReference type="RefSeq" id="XP_016858969.1">
    <molecule id="Q7RTX9-1"/>
    <property type="nucleotide sequence ID" value="XM_017003480.3"/>
</dbReference>
<dbReference type="RefSeq" id="XP_054196778.1">
    <molecule id="Q7RTX9-1"/>
    <property type="nucleotide sequence ID" value="XM_054340803.1"/>
</dbReference>
<dbReference type="RefSeq" id="XP_054196779.1">
    <molecule id="Q7RTX9-1"/>
    <property type="nucleotide sequence ID" value="XM_054340804.1"/>
</dbReference>
<dbReference type="SMR" id="Q7RTX9"/>
<dbReference type="BioGRID" id="127380">
    <property type="interactions" value="12"/>
</dbReference>
<dbReference type="FunCoup" id="Q7RTX9">
    <property type="interactions" value="56"/>
</dbReference>
<dbReference type="IntAct" id="Q7RTX9">
    <property type="interactions" value="2"/>
</dbReference>
<dbReference type="STRING" id="9606.ENSP00000295190"/>
<dbReference type="TCDB" id="2.A.1.13.12">
    <property type="family name" value="the major facilitator superfamily (mfs)"/>
</dbReference>
<dbReference type="iPTMnet" id="Q7RTX9"/>
<dbReference type="PhosphoSitePlus" id="Q7RTX9"/>
<dbReference type="BioMuta" id="SLC16A14"/>
<dbReference type="DMDM" id="74738645"/>
<dbReference type="MassIVE" id="Q7RTX9"/>
<dbReference type="PaxDb" id="9606-ENSP00000295190"/>
<dbReference type="PeptideAtlas" id="Q7RTX9"/>
<dbReference type="Antibodypedia" id="50076">
    <property type="antibodies" value="73 antibodies from 19 providers"/>
</dbReference>
<dbReference type="DNASU" id="151473"/>
<dbReference type="Ensembl" id="ENST00000295190.9">
    <molecule id="Q7RTX9-1"/>
    <property type="protein sequence ID" value="ENSP00000295190.4"/>
    <property type="gene ID" value="ENSG00000163053.11"/>
</dbReference>
<dbReference type="GeneID" id="151473"/>
<dbReference type="KEGG" id="hsa:151473"/>
<dbReference type="MANE-Select" id="ENST00000295190.9">
    <property type="protein sequence ID" value="ENSP00000295190.4"/>
    <property type="RefSeq nucleotide sequence ID" value="NM_152527.5"/>
    <property type="RefSeq protein sequence ID" value="NP_689740.2"/>
</dbReference>
<dbReference type="UCSC" id="uc002vqd.2">
    <molecule id="Q7RTX9-1"/>
    <property type="organism name" value="human"/>
</dbReference>
<dbReference type="AGR" id="HGNC:26417"/>
<dbReference type="CTD" id="151473"/>
<dbReference type="DisGeNET" id="151473"/>
<dbReference type="GeneCards" id="SLC16A14"/>
<dbReference type="HGNC" id="HGNC:26417">
    <property type="gene designation" value="SLC16A14"/>
</dbReference>
<dbReference type="HPA" id="ENSG00000163053">
    <property type="expression patterns" value="Tissue enhanced (salivary)"/>
</dbReference>
<dbReference type="neXtProt" id="NX_Q7RTX9"/>
<dbReference type="OpenTargets" id="ENSG00000163053"/>
<dbReference type="PharmGKB" id="PA134983567"/>
<dbReference type="VEuPathDB" id="HostDB:ENSG00000163053"/>
<dbReference type="eggNOG" id="KOG2504">
    <property type="taxonomic scope" value="Eukaryota"/>
</dbReference>
<dbReference type="GeneTree" id="ENSGT00940000160895"/>
<dbReference type="HOGENOM" id="CLU_001265_59_1_1"/>
<dbReference type="InParanoid" id="Q7RTX9"/>
<dbReference type="OMA" id="CVFISCC"/>
<dbReference type="OrthoDB" id="2213137at2759"/>
<dbReference type="PAN-GO" id="Q7RTX9">
    <property type="GO annotations" value="3 GO annotations based on evolutionary models"/>
</dbReference>
<dbReference type="PhylomeDB" id="Q7RTX9"/>
<dbReference type="TreeFam" id="TF313792"/>
<dbReference type="PathwayCommons" id="Q7RTX9"/>
<dbReference type="SignaLink" id="Q7RTX9"/>
<dbReference type="BioGRID-ORCS" id="151473">
    <property type="hits" value="14 hits in 1146 CRISPR screens"/>
</dbReference>
<dbReference type="ChiTaRS" id="SLC16A14">
    <property type="organism name" value="human"/>
</dbReference>
<dbReference type="GenomeRNAi" id="151473"/>
<dbReference type="Pharos" id="Q7RTX9">
    <property type="development level" value="Tbio"/>
</dbReference>
<dbReference type="PRO" id="PR:Q7RTX9"/>
<dbReference type="Proteomes" id="UP000005640">
    <property type="component" value="Chromosome 2"/>
</dbReference>
<dbReference type="RNAct" id="Q7RTX9">
    <property type="molecule type" value="protein"/>
</dbReference>
<dbReference type="Bgee" id="ENSG00000163053">
    <property type="expression patterns" value="Expressed in pigmented layer of retina and 184 other cell types or tissues"/>
</dbReference>
<dbReference type="ExpressionAtlas" id="Q7RTX9">
    <property type="expression patterns" value="baseline and differential"/>
</dbReference>
<dbReference type="GO" id="GO:0005886">
    <property type="term" value="C:plasma membrane"/>
    <property type="evidence" value="ECO:0000318"/>
    <property type="project" value="GO_Central"/>
</dbReference>
<dbReference type="GO" id="GO:0008028">
    <property type="term" value="F:monocarboxylic acid transmembrane transporter activity"/>
    <property type="evidence" value="ECO:0000318"/>
    <property type="project" value="GO_Central"/>
</dbReference>
<dbReference type="GO" id="GO:0015293">
    <property type="term" value="F:symporter activity"/>
    <property type="evidence" value="ECO:0007669"/>
    <property type="project" value="UniProtKB-KW"/>
</dbReference>
<dbReference type="GO" id="GO:1905039">
    <property type="term" value="P:carboxylic acid transmembrane transport"/>
    <property type="evidence" value="ECO:0000318"/>
    <property type="project" value="GO_Central"/>
</dbReference>
<dbReference type="CDD" id="cd17429">
    <property type="entry name" value="MFS_MCT14"/>
    <property type="match status" value="1"/>
</dbReference>
<dbReference type="FunFam" id="1.20.1250.20:FF:001028">
    <property type="entry name" value="Solute carrier family 16 member 14"/>
    <property type="match status" value="1"/>
</dbReference>
<dbReference type="FunFam" id="1.20.1250.20:FF:001049">
    <property type="entry name" value="Solute carrier family 16 member 14"/>
    <property type="match status" value="1"/>
</dbReference>
<dbReference type="Gene3D" id="1.20.1250.20">
    <property type="entry name" value="MFS general substrate transporter like domains"/>
    <property type="match status" value="1"/>
</dbReference>
<dbReference type="InterPro" id="IPR011701">
    <property type="entry name" value="MFS"/>
</dbReference>
<dbReference type="InterPro" id="IPR020846">
    <property type="entry name" value="MFS_dom"/>
</dbReference>
<dbReference type="InterPro" id="IPR036259">
    <property type="entry name" value="MFS_trans_sf"/>
</dbReference>
<dbReference type="InterPro" id="IPR050327">
    <property type="entry name" value="Proton-linked_MCT"/>
</dbReference>
<dbReference type="PANTHER" id="PTHR11360">
    <property type="entry name" value="MONOCARBOXYLATE TRANSPORTER"/>
    <property type="match status" value="1"/>
</dbReference>
<dbReference type="PANTHER" id="PTHR11360:SF239">
    <property type="entry name" value="MONOCARBOXYLATE TRANSPORTER 14"/>
    <property type="match status" value="1"/>
</dbReference>
<dbReference type="Pfam" id="PF07690">
    <property type="entry name" value="MFS_1"/>
    <property type="match status" value="1"/>
</dbReference>
<dbReference type="SUPFAM" id="SSF103473">
    <property type="entry name" value="MFS general substrate transporter"/>
    <property type="match status" value="1"/>
</dbReference>
<dbReference type="PROSITE" id="PS50850">
    <property type="entry name" value="MFS"/>
    <property type="match status" value="1"/>
</dbReference>
<reference key="1">
    <citation type="journal article" date="2004" name="Nat. Genet.">
        <title>Complete sequencing and characterization of 21,243 full-length human cDNAs.</title>
        <authorList>
            <person name="Ota T."/>
            <person name="Suzuki Y."/>
            <person name="Nishikawa T."/>
            <person name="Otsuki T."/>
            <person name="Sugiyama T."/>
            <person name="Irie R."/>
            <person name="Wakamatsu A."/>
            <person name="Hayashi K."/>
            <person name="Sato H."/>
            <person name="Nagai K."/>
            <person name="Kimura K."/>
            <person name="Makita H."/>
            <person name="Sekine M."/>
            <person name="Obayashi M."/>
            <person name="Nishi T."/>
            <person name="Shibahara T."/>
            <person name="Tanaka T."/>
            <person name="Ishii S."/>
            <person name="Yamamoto J."/>
            <person name="Saito K."/>
            <person name="Kawai Y."/>
            <person name="Isono Y."/>
            <person name="Nakamura Y."/>
            <person name="Nagahari K."/>
            <person name="Murakami K."/>
            <person name="Yasuda T."/>
            <person name="Iwayanagi T."/>
            <person name="Wagatsuma M."/>
            <person name="Shiratori A."/>
            <person name="Sudo H."/>
            <person name="Hosoiri T."/>
            <person name="Kaku Y."/>
            <person name="Kodaira H."/>
            <person name="Kondo H."/>
            <person name="Sugawara M."/>
            <person name="Takahashi M."/>
            <person name="Kanda K."/>
            <person name="Yokoi T."/>
            <person name="Furuya T."/>
            <person name="Kikkawa E."/>
            <person name="Omura Y."/>
            <person name="Abe K."/>
            <person name="Kamihara K."/>
            <person name="Katsuta N."/>
            <person name="Sato K."/>
            <person name="Tanikawa M."/>
            <person name="Yamazaki M."/>
            <person name="Ninomiya K."/>
            <person name="Ishibashi T."/>
            <person name="Yamashita H."/>
            <person name="Murakawa K."/>
            <person name="Fujimori K."/>
            <person name="Tanai H."/>
            <person name="Kimata M."/>
            <person name="Watanabe M."/>
            <person name="Hiraoka S."/>
            <person name="Chiba Y."/>
            <person name="Ishida S."/>
            <person name="Ono Y."/>
            <person name="Takiguchi S."/>
            <person name="Watanabe S."/>
            <person name="Yosida M."/>
            <person name="Hotuta T."/>
            <person name="Kusano J."/>
            <person name="Kanehori K."/>
            <person name="Takahashi-Fujii A."/>
            <person name="Hara H."/>
            <person name="Tanase T.-O."/>
            <person name="Nomura Y."/>
            <person name="Togiya S."/>
            <person name="Komai F."/>
            <person name="Hara R."/>
            <person name="Takeuchi K."/>
            <person name="Arita M."/>
            <person name="Imose N."/>
            <person name="Musashino K."/>
            <person name="Yuuki H."/>
            <person name="Oshima A."/>
            <person name="Sasaki N."/>
            <person name="Aotsuka S."/>
            <person name="Yoshikawa Y."/>
            <person name="Matsunawa H."/>
            <person name="Ichihara T."/>
            <person name="Shiohata N."/>
            <person name="Sano S."/>
            <person name="Moriya S."/>
            <person name="Momiyama H."/>
            <person name="Satoh N."/>
            <person name="Takami S."/>
            <person name="Terashima Y."/>
            <person name="Suzuki O."/>
            <person name="Nakagawa S."/>
            <person name="Senoh A."/>
            <person name="Mizoguchi H."/>
            <person name="Goto Y."/>
            <person name="Shimizu F."/>
            <person name="Wakebe H."/>
            <person name="Hishigaki H."/>
            <person name="Watanabe T."/>
            <person name="Sugiyama A."/>
            <person name="Takemoto M."/>
            <person name="Kawakami B."/>
            <person name="Yamazaki M."/>
            <person name="Watanabe K."/>
            <person name="Kumagai A."/>
            <person name="Itakura S."/>
            <person name="Fukuzumi Y."/>
            <person name="Fujimori Y."/>
            <person name="Komiyama M."/>
            <person name="Tashiro H."/>
            <person name="Tanigami A."/>
            <person name="Fujiwara T."/>
            <person name="Ono T."/>
            <person name="Yamada K."/>
            <person name="Fujii Y."/>
            <person name="Ozaki K."/>
            <person name="Hirao M."/>
            <person name="Ohmori Y."/>
            <person name="Kawabata A."/>
            <person name="Hikiji T."/>
            <person name="Kobatake N."/>
            <person name="Inagaki H."/>
            <person name="Ikema Y."/>
            <person name="Okamoto S."/>
            <person name="Okitani R."/>
            <person name="Kawakami T."/>
            <person name="Noguchi S."/>
            <person name="Itoh T."/>
            <person name="Shigeta K."/>
            <person name="Senba T."/>
            <person name="Matsumura K."/>
            <person name="Nakajima Y."/>
            <person name="Mizuno T."/>
            <person name="Morinaga M."/>
            <person name="Sasaki M."/>
            <person name="Togashi T."/>
            <person name="Oyama M."/>
            <person name="Hata H."/>
            <person name="Watanabe M."/>
            <person name="Komatsu T."/>
            <person name="Mizushima-Sugano J."/>
            <person name="Satoh T."/>
            <person name="Shirai Y."/>
            <person name="Takahashi Y."/>
            <person name="Nakagawa K."/>
            <person name="Okumura K."/>
            <person name="Nagase T."/>
            <person name="Nomura N."/>
            <person name="Kikuchi H."/>
            <person name="Masuho Y."/>
            <person name="Yamashita R."/>
            <person name="Nakai K."/>
            <person name="Yada T."/>
            <person name="Nakamura Y."/>
            <person name="Ohara O."/>
            <person name="Isogai T."/>
            <person name="Sugano S."/>
        </authorList>
    </citation>
    <scope>NUCLEOTIDE SEQUENCE [LARGE SCALE MRNA] (ISOFORMS 1 AND 2)</scope>
    <source>
        <tissue>Brain</tissue>
        <tissue>Brain cortex</tissue>
        <tissue>Trachea</tissue>
    </source>
</reference>
<reference key="2">
    <citation type="journal article" date="2005" name="Nature">
        <title>Generation and annotation of the DNA sequences of human chromosomes 2 and 4.</title>
        <authorList>
            <person name="Hillier L.W."/>
            <person name="Graves T.A."/>
            <person name="Fulton R.S."/>
            <person name="Fulton L.A."/>
            <person name="Pepin K.H."/>
            <person name="Minx P."/>
            <person name="Wagner-McPherson C."/>
            <person name="Layman D."/>
            <person name="Wylie K."/>
            <person name="Sekhon M."/>
            <person name="Becker M.C."/>
            <person name="Fewell G.A."/>
            <person name="Delehaunty K.D."/>
            <person name="Miner T.L."/>
            <person name="Nash W.E."/>
            <person name="Kremitzki C."/>
            <person name="Oddy L."/>
            <person name="Du H."/>
            <person name="Sun H."/>
            <person name="Bradshaw-Cordum H."/>
            <person name="Ali J."/>
            <person name="Carter J."/>
            <person name="Cordes M."/>
            <person name="Harris A."/>
            <person name="Isak A."/>
            <person name="van Brunt A."/>
            <person name="Nguyen C."/>
            <person name="Du F."/>
            <person name="Courtney L."/>
            <person name="Kalicki J."/>
            <person name="Ozersky P."/>
            <person name="Abbott S."/>
            <person name="Armstrong J."/>
            <person name="Belter E.A."/>
            <person name="Caruso L."/>
            <person name="Cedroni M."/>
            <person name="Cotton M."/>
            <person name="Davidson T."/>
            <person name="Desai A."/>
            <person name="Elliott G."/>
            <person name="Erb T."/>
            <person name="Fronick C."/>
            <person name="Gaige T."/>
            <person name="Haakenson W."/>
            <person name="Haglund K."/>
            <person name="Holmes A."/>
            <person name="Harkins R."/>
            <person name="Kim K."/>
            <person name="Kruchowski S.S."/>
            <person name="Strong C.M."/>
            <person name="Grewal N."/>
            <person name="Goyea E."/>
            <person name="Hou S."/>
            <person name="Levy A."/>
            <person name="Martinka S."/>
            <person name="Mead K."/>
            <person name="McLellan M.D."/>
            <person name="Meyer R."/>
            <person name="Randall-Maher J."/>
            <person name="Tomlinson C."/>
            <person name="Dauphin-Kohlberg S."/>
            <person name="Kozlowicz-Reilly A."/>
            <person name="Shah N."/>
            <person name="Swearengen-Shahid S."/>
            <person name="Snider J."/>
            <person name="Strong J.T."/>
            <person name="Thompson J."/>
            <person name="Yoakum M."/>
            <person name="Leonard S."/>
            <person name="Pearman C."/>
            <person name="Trani L."/>
            <person name="Radionenko M."/>
            <person name="Waligorski J.E."/>
            <person name="Wang C."/>
            <person name="Rock S.M."/>
            <person name="Tin-Wollam A.-M."/>
            <person name="Maupin R."/>
            <person name="Latreille P."/>
            <person name="Wendl M.C."/>
            <person name="Yang S.-P."/>
            <person name="Pohl C."/>
            <person name="Wallis J.W."/>
            <person name="Spieth J."/>
            <person name="Bieri T.A."/>
            <person name="Berkowicz N."/>
            <person name="Nelson J.O."/>
            <person name="Osborne J."/>
            <person name="Ding L."/>
            <person name="Meyer R."/>
            <person name="Sabo A."/>
            <person name="Shotland Y."/>
            <person name="Sinha P."/>
            <person name="Wohldmann P.E."/>
            <person name="Cook L.L."/>
            <person name="Hickenbotham M.T."/>
            <person name="Eldred J."/>
            <person name="Williams D."/>
            <person name="Jones T.A."/>
            <person name="She X."/>
            <person name="Ciccarelli F.D."/>
            <person name="Izaurralde E."/>
            <person name="Taylor J."/>
            <person name="Schmutz J."/>
            <person name="Myers R.M."/>
            <person name="Cox D.R."/>
            <person name="Huang X."/>
            <person name="McPherson J.D."/>
            <person name="Mardis E.R."/>
            <person name="Clifton S.W."/>
            <person name="Warren W.C."/>
            <person name="Chinwalla A.T."/>
            <person name="Eddy S.R."/>
            <person name="Marra M.A."/>
            <person name="Ovcharenko I."/>
            <person name="Furey T.S."/>
            <person name="Miller W."/>
            <person name="Eichler E.E."/>
            <person name="Bork P."/>
            <person name="Suyama M."/>
            <person name="Torrents D."/>
            <person name="Waterston R.H."/>
            <person name="Wilson R.K."/>
        </authorList>
    </citation>
    <scope>NUCLEOTIDE SEQUENCE [LARGE SCALE GENOMIC DNA]</scope>
</reference>
<reference key="3">
    <citation type="submission" date="2005-07" db="EMBL/GenBank/DDBJ databases">
        <authorList>
            <person name="Mural R.J."/>
            <person name="Istrail S."/>
            <person name="Sutton G.G."/>
            <person name="Florea L."/>
            <person name="Halpern A.L."/>
            <person name="Mobarry C.M."/>
            <person name="Lippert R."/>
            <person name="Walenz B."/>
            <person name="Shatkay H."/>
            <person name="Dew I."/>
            <person name="Miller J.R."/>
            <person name="Flanigan M.J."/>
            <person name="Edwards N.J."/>
            <person name="Bolanos R."/>
            <person name="Fasulo D."/>
            <person name="Halldorsson B.V."/>
            <person name="Hannenhalli S."/>
            <person name="Turner R."/>
            <person name="Yooseph S."/>
            <person name="Lu F."/>
            <person name="Nusskern D.R."/>
            <person name="Shue B.C."/>
            <person name="Zheng X.H."/>
            <person name="Zhong F."/>
            <person name="Delcher A.L."/>
            <person name="Huson D.H."/>
            <person name="Kravitz S.A."/>
            <person name="Mouchard L."/>
            <person name="Reinert K."/>
            <person name="Remington K.A."/>
            <person name="Clark A.G."/>
            <person name="Waterman M.S."/>
            <person name="Eichler E.E."/>
            <person name="Adams M.D."/>
            <person name="Hunkapiller M.W."/>
            <person name="Myers E.W."/>
            <person name="Venter J.C."/>
        </authorList>
    </citation>
    <scope>NUCLEOTIDE SEQUENCE [LARGE SCALE GENOMIC DNA]</scope>
</reference>
<reference key="4">
    <citation type="journal article" date="2004" name="Genome Res.">
        <title>The status, quality, and expansion of the NIH full-length cDNA project: the Mammalian Gene Collection (MGC).</title>
        <authorList>
            <consortium name="The MGC Project Team"/>
        </authorList>
    </citation>
    <scope>NUCLEOTIDE SEQUENCE [LARGE SCALE MRNA] (ISOFORM 1)</scope>
    <source>
        <tissue>Brain</tissue>
        <tissue>Lung</tissue>
    </source>
</reference>
<reference key="5">
    <citation type="journal article" date="2004" name="Pflugers Arch.">
        <title>The SLC16 gene family-from monocarboxylate transporters (MCTs) to aromatic amino acid transporters and beyond.</title>
        <authorList>
            <person name="Halestrap A.P."/>
            <person name="Meredith D."/>
        </authorList>
    </citation>
    <scope>IDENTIFICATION (ISOFORM 1)</scope>
</reference>
<protein>
    <recommendedName>
        <fullName>Monocarboxylate transporter 14</fullName>
        <shortName>MCT 14</shortName>
    </recommendedName>
    <alternativeName>
        <fullName>Solute carrier family 16 member 14</fullName>
    </alternativeName>
</protein>
<evidence type="ECO:0000250" key="1"/>
<evidence type="ECO:0000255" key="2"/>
<evidence type="ECO:0000256" key="3">
    <source>
        <dbReference type="SAM" id="MobiDB-lite"/>
    </source>
</evidence>
<evidence type="ECO:0000303" key="4">
    <source>
    </source>
</evidence>
<evidence type="ECO:0000305" key="5"/>
<proteinExistence type="evidence at protein level"/>
<gene>
    <name type="primary">SLC16A14</name>
    <name type="synonym">MCT14</name>
</gene>
<sequence>MYTSHEDIGYDFEDGPKDKKTLKPHPNIDGGWAWMMVLSSFFVHILIMGSQMALGVLNVEWLEEFHQSRGLTAWVSSLSMGITLIVGPFIGLFINTCGCRQTAIIGGLVNSLGWVLSAYAANVHYLFITFGVAAGLGSGMAYLPAVVMVGRYFQKRRALAQGLSTTGTGFGTFLMTVLLKYLCAEYGWRNAMLIQGAVSLNLCVCGALMRPLSPGKNPNDPGEKDVRGLPAHSTESVKSTGQQGRTEEKDGGLGNEETLCDLQAQECPDQAGHRKNMCALRILKTVSWLTMRVRKGFEDWYSGYFGTASLFTNRMFVAFIFWALFAYSSFVIPFIHLPEIVNLYNLSEQNDVFPLTSIIAIVHIFGKVILGVIADLPCISVWNVFLLANFTLVLSIFILPLMHTYAGLAVICALIGFSSGYFSLMPVVTEDLVGIEHLANAYGIIICANGISALLGPPFAGWIYDITQKYDFSFYICGLLYMIGILFLLIQPCIRIIEQSRRKYMDGAHV</sequence>